<proteinExistence type="evidence at protein level"/>
<dbReference type="EMBL" id="J02990">
    <property type="protein sequence ID" value="AAA40296.1"/>
    <property type="molecule type" value="mRNA"/>
</dbReference>
<dbReference type="EMBL" id="M23376">
    <property type="protein sequence ID" value="AAA72720.1"/>
    <property type="molecule type" value="Genomic_DNA"/>
</dbReference>
<dbReference type="EMBL" id="M23370">
    <property type="protein sequence ID" value="AAA72720.1"/>
    <property type="status" value="JOINED"/>
    <property type="molecule type" value="Genomic_DNA"/>
</dbReference>
<dbReference type="EMBL" id="M23371">
    <property type="protein sequence ID" value="AAA72720.1"/>
    <property type="status" value="JOINED"/>
    <property type="molecule type" value="Genomic_DNA"/>
</dbReference>
<dbReference type="EMBL" id="M23372">
    <property type="protein sequence ID" value="AAA72720.1"/>
    <property type="status" value="JOINED"/>
    <property type="molecule type" value="Genomic_DNA"/>
</dbReference>
<dbReference type="EMBL" id="M23373">
    <property type="protein sequence ID" value="AAA72720.1"/>
    <property type="status" value="JOINED"/>
    <property type="molecule type" value="Genomic_DNA"/>
</dbReference>
<dbReference type="EMBL" id="M23374">
    <property type="protein sequence ID" value="AAA72720.1"/>
    <property type="status" value="JOINED"/>
    <property type="molecule type" value="Genomic_DNA"/>
</dbReference>
<dbReference type="EMBL" id="M23375">
    <property type="protein sequence ID" value="AAA72720.1"/>
    <property type="status" value="JOINED"/>
    <property type="molecule type" value="Genomic_DNA"/>
</dbReference>
<dbReference type="CCDS" id="CCDS23125.1"/>
<dbReference type="PIR" id="A31348">
    <property type="entry name" value="A31348"/>
</dbReference>
<dbReference type="RefSeq" id="NP_031674.1">
    <property type="nucleotide sequence ID" value="NM_007648.5"/>
</dbReference>
<dbReference type="RefSeq" id="XP_006510029.1">
    <property type="nucleotide sequence ID" value="XM_006509966.4"/>
</dbReference>
<dbReference type="PDB" id="1JBJ">
    <property type="method" value="NMR"/>
    <property type="chains" value="A=22-100"/>
</dbReference>
<dbReference type="PDB" id="1XMW">
    <property type="method" value="NMR"/>
    <property type="chains" value="A=22-100"/>
</dbReference>
<dbReference type="PDB" id="2K4F">
    <property type="method" value="NMR"/>
    <property type="chains" value="A=134-189"/>
</dbReference>
<dbReference type="PDB" id="3R08">
    <property type="method" value="X-ray"/>
    <property type="resolution" value="4.10 A"/>
    <property type="chains" value="E=22-100"/>
</dbReference>
<dbReference type="PDBsum" id="1JBJ"/>
<dbReference type="PDBsum" id="1XMW"/>
<dbReference type="PDBsum" id="2K4F"/>
<dbReference type="PDBsum" id="3R08"/>
<dbReference type="SMR" id="P22646"/>
<dbReference type="BioGRID" id="198596">
    <property type="interactions" value="6"/>
</dbReference>
<dbReference type="CORUM" id="P22646"/>
<dbReference type="FunCoup" id="P22646">
    <property type="interactions" value="312"/>
</dbReference>
<dbReference type="IntAct" id="P22646">
    <property type="interactions" value="3"/>
</dbReference>
<dbReference type="MINT" id="P22646"/>
<dbReference type="STRING" id="10090.ENSMUSP00000099896"/>
<dbReference type="iPTMnet" id="P22646"/>
<dbReference type="PhosphoSitePlus" id="P22646"/>
<dbReference type="SwissPalm" id="P22646"/>
<dbReference type="jPOST" id="P22646"/>
<dbReference type="PaxDb" id="10090-ENSMUSP00000099896"/>
<dbReference type="ProteomicsDB" id="279968"/>
<dbReference type="ABCD" id="P22646">
    <property type="antibodies" value="2 sequenced antibodies"/>
</dbReference>
<dbReference type="Antibodypedia" id="3494">
    <property type="antibodies" value="7230 antibodies from 61 providers"/>
</dbReference>
<dbReference type="DNASU" id="12501"/>
<dbReference type="Ensembl" id="ENSMUST00000102832.3">
    <property type="protein sequence ID" value="ENSMUSP00000099896.2"/>
    <property type="gene ID" value="ENSMUSG00000032093.8"/>
</dbReference>
<dbReference type="GeneID" id="12501"/>
<dbReference type="KEGG" id="mmu:12501"/>
<dbReference type="UCSC" id="uc009pez.1">
    <property type="organism name" value="mouse"/>
</dbReference>
<dbReference type="AGR" id="MGI:88332"/>
<dbReference type="CTD" id="916"/>
<dbReference type="MGI" id="MGI:88332">
    <property type="gene designation" value="Cd3e"/>
</dbReference>
<dbReference type="VEuPathDB" id="HostDB:ENSMUSG00000032093"/>
<dbReference type="eggNOG" id="ENOG502S8KB">
    <property type="taxonomic scope" value="Eukaryota"/>
</dbReference>
<dbReference type="GeneTree" id="ENSGT00940000153312"/>
<dbReference type="HOGENOM" id="CLU_117945_0_0_1"/>
<dbReference type="InParanoid" id="P22646"/>
<dbReference type="OMA" id="RVVLTCP"/>
<dbReference type="OrthoDB" id="9947847at2759"/>
<dbReference type="PhylomeDB" id="P22646"/>
<dbReference type="TreeFam" id="TF335892"/>
<dbReference type="Reactome" id="R-MMU-198933">
    <property type="pathway name" value="Immunoregulatory interactions between a Lymphoid and a non-Lymphoid cell"/>
</dbReference>
<dbReference type="Reactome" id="R-MMU-202424">
    <property type="pathway name" value="Downstream TCR signaling"/>
</dbReference>
<dbReference type="Reactome" id="R-MMU-202427">
    <property type="pathway name" value="Phosphorylation of CD3 and TCR zeta chains"/>
</dbReference>
<dbReference type="Reactome" id="R-MMU-202430">
    <property type="pathway name" value="Translocation of ZAP-70 to Immunological synapse"/>
</dbReference>
<dbReference type="Reactome" id="R-MMU-202433">
    <property type="pathway name" value="Generation of second messenger molecules"/>
</dbReference>
<dbReference type="Reactome" id="R-MMU-389948">
    <property type="pathway name" value="Co-inhibition by PD-1"/>
</dbReference>
<dbReference type="BioGRID-ORCS" id="12501">
    <property type="hits" value="2 hits in 77 CRISPR screens"/>
</dbReference>
<dbReference type="ChiTaRS" id="Cd3e">
    <property type="organism name" value="mouse"/>
</dbReference>
<dbReference type="EvolutionaryTrace" id="P22646"/>
<dbReference type="PRO" id="PR:P22646"/>
<dbReference type="Proteomes" id="UP000000589">
    <property type="component" value="Chromosome 9"/>
</dbReference>
<dbReference type="RNAct" id="P22646">
    <property type="molecule type" value="protein"/>
</dbReference>
<dbReference type="Bgee" id="ENSMUSG00000032093">
    <property type="expression patterns" value="Expressed in peripheral lymph node and 56 other cell types or tissues"/>
</dbReference>
<dbReference type="ExpressionAtlas" id="P22646">
    <property type="expression patterns" value="baseline and differential"/>
</dbReference>
<dbReference type="GO" id="GO:0042105">
    <property type="term" value="C:alpha-beta T cell receptor complex"/>
    <property type="evidence" value="ECO:0000314"/>
    <property type="project" value="MGI"/>
</dbReference>
<dbReference type="GO" id="GO:0044297">
    <property type="term" value="C:cell body"/>
    <property type="evidence" value="ECO:0000314"/>
    <property type="project" value="ARUK-UCL"/>
</dbReference>
<dbReference type="GO" id="GO:0005911">
    <property type="term" value="C:cell-cell junction"/>
    <property type="evidence" value="ECO:0000314"/>
    <property type="project" value="MGI"/>
</dbReference>
<dbReference type="GO" id="GO:0043197">
    <property type="term" value="C:dendritic spine"/>
    <property type="evidence" value="ECO:0000314"/>
    <property type="project" value="ARUK-UCL"/>
</dbReference>
<dbReference type="GO" id="GO:0005783">
    <property type="term" value="C:endoplasmic reticulum"/>
    <property type="evidence" value="ECO:0007669"/>
    <property type="project" value="Ensembl"/>
</dbReference>
<dbReference type="GO" id="GO:0009897">
    <property type="term" value="C:external side of plasma membrane"/>
    <property type="evidence" value="ECO:0000314"/>
    <property type="project" value="MGI"/>
</dbReference>
<dbReference type="GO" id="GO:0005794">
    <property type="term" value="C:Golgi apparatus"/>
    <property type="evidence" value="ECO:0007669"/>
    <property type="project" value="Ensembl"/>
</dbReference>
<dbReference type="GO" id="GO:0001772">
    <property type="term" value="C:immunological synapse"/>
    <property type="evidence" value="ECO:0000314"/>
    <property type="project" value="MGI"/>
</dbReference>
<dbReference type="GO" id="GO:0005886">
    <property type="term" value="C:plasma membrane"/>
    <property type="evidence" value="ECO:0000314"/>
    <property type="project" value="ARUK-UCL"/>
</dbReference>
<dbReference type="GO" id="GO:0042101">
    <property type="term" value="C:T cell receptor complex"/>
    <property type="evidence" value="ECO:0000266"/>
    <property type="project" value="MGI"/>
</dbReference>
<dbReference type="GO" id="GO:0042802">
    <property type="term" value="F:identical protein binding"/>
    <property type="evidence" value="ECO:0007669"/>
    <property type="project" value="Ensembl"/>
</dbReference>
<dbReference type="GO" id="GO:0017124">
    <property type="term" value="F:SH3 domain binding"/>
    <property type="evidence" value="ECO:0007669"/>
    <property type="project" value="Ensembl"/>
</dbReference>
<dbReference type="GO" id="GO:0004888">
    <property type="term" value="F:transmembrane signaling receptor activity"/>
    <property type="evidence" value="ECO:0007669"/>
    <property type="project" value="Ensembl"/>
</dbReference>
<dbReference type="GO" id="GO:0002250">
    <property type="term" value="P:adaptive immune response"/>
    <property type="evidence" value="ECO:0007669"/>
    <property type="project" value="UniProtKB-KW"/>
</dbReference>
<dbReference type="GO" id="GO:0097190">
    <property type="term" value="P:apoptotic signaling pathway"/>
    <property type="evidence" value="ECO:0000314"/>
    <property type="project" value="MGI"/>
</dbReference>
<dbReference type="GO" id="GO:0019722">
    <property type="term" value="P:calcium-mediated signaling"/>
    <property type="evidence" value="ECO:0000314"/>
    <property type="project" value="MGI"/>
</dbReference>
<dbReference type="GO" id="GO:0035739">
    <property type="term" value="P:CD4-positive, alpha-beta T cell proliferation"/>
    <property type="evidence" value="ECO:0000314"/>
    <property type="project" value="MGI"/>
</dbReference>
<dbReference type="GO" id="GO:0007166">
    <property type="term" value="P:cell surface receptor signaling pathway"/>
    <property type="evidence" value="ECO:0000314"/>
    <property type="project" value="MGI"/>
</dbReference>
<dbReference type="GO" id="GO:0021549">
    <property type="term" value="P:cerebellum development"/>
    <property type="evidence" value="ECO:0000315"/>
    <property type="project" value="ARUK-UCL"/>
</dbReference>
<dbReference type="GO" id="GO:0016358">
    <property type="term" value="P:dendrite development"/>
    <property type="evidence" value="ECO:0000315"/>
    <property type="project" value="ARUK-UCL"/>
</dbReference>
<dbReference type="GO" id="GO:0046649">
    <property type="term" value="P:lymphocyte activation"/>
    <property type="evidence" value="ECO:0000315"/>
    <property type="project" value="MGI"/>
</dbReference>
<dbReference type="GO" id="GO:0010629">
    <property type="term" value="P:negative regulation of gene expression"/>
    <property type="evidence" value="ECO:0007669"/>
    <property type="project" value="Ensembl"/>
</dbReference>
<dbReference type="GO" id="GO:0045879">
    <property type="term" value="P:negative regulation of smoothened signaling pathway"/>
    <property type="evidence" value="ECO:0000314"/>
    <property type="project" value="MGI"/>
</dbReference>
<dbReference type="GO" id="GO:0045060">
    <property type="term" value="P:negative thymic T cell selection"/>
    <property type="evidence" value="ECO:0000314"/>
    <property type="project" value="MGI"/>
</dbReference>
<dbReference type="GO" id="GO:0050850">
    <property type="term" value="P:positive regulation of calcium-mediated signaling"/>
    <property type="evidence" value="ECO:0000314"/>
    <property type="project" value="MGI"/>
</dbReference>
<dbReference type="GO" id="GO:2000563">
    <property type="term" value="P:positive regulation of CD4-positive, alpha-beta T cell proliferation"/>
    <property type="evidence" value="ECO:0000314"/>
    <property type="project" value="MGI"/>
</dbReference>
<dbReference type="GO" id="GO:0033634">
    <property type="term" value="P:positive regulation of cell-cell adhesion mediated by integrin"/>
    <property type="evidence" value="ECO:0000316"/>
    <property type="project" value="BHF-UCL"/>
</dbReference>
<dbReference type="GO" id="GO:0001954">
    <property type="term" value="P:positive regulation of cell-matrix adhesion"/>
    <property type="evidence" value="ECO:0000316"/>
    <property type="project" value="BHF-UCL"/>
</dbReference>
<dbReference type="GO" id="GO:0032743">
    <property type="term" value="P:positive regulation of interleukin-2 production"/>
    <property type="evidence" value="ECO:0000314"/>
    <property type="project" value="MGI"/>
</dbReference>
<dbReference type="GO" id="GO:0032753">
    <property type="term" value="P:positive regulation of interleukin-4 production"/>
    <property type="evidence" value="ECO:0000314"/>
    <property type="project" value="MGI"/>
</dbReference>
<dbReference type="GO" id="GO:0050870">
    <property type="term" value="P:positive regulation of T cell activation"/>
    <property type="evidence" value="ECO:0000314"/>
    <property type="project" value="MGI"/>
</dbReference>
<dbReference type="GO" id="GO:0002669">
    <property type="term" value="P:positive regulation of T cell anergy"/>
    <property type="evidence" value="ECO:0000314"/>
    <property type="project" value="MGI"/>
</dbReference>
<dbReference type="GO" id="GO:0042102">
    <property type="term" value="P:positive regulation of T cell proliferation"/>
    <property type="evidence" value="ECO:0000314"/>
    <property type="project" value="MGI"/>
</dbReference>
<dbReference type="GO" id="GO:0032729">
    <property type="term" value="P:positive regulation of type II interferon production"/>
    <property type="evidence" value="ECO:0000314"/>
    <property type="project" value="MGI"/>
</dbReference>
<dbReference type="GO" id="GO:0007224">
    <property type="term" value="P:smoothened signaling pathway"/>
    <property type="evidence" value="ECO:0000314"/>
    <property type="project" value="MGI"/>
</dbReference>
<dbReference type="GO" id="GO:0042110">
    <property type="term" value="P:T cell activation"/>
    <property type="evidence" value="ECO:0000314"/>
    <property type="project" value="MGI"/>
</dbReference>
<dbReference type="GO" id="GO:0002870">
    <property type="term" value="P:T cell anergy"/>
    <property type="evidence" value="ECO:0000314"/>
    <property type="project" value="MGI"/>
</dbReference>
<dbReference type="GO" id="GO:0031295">
    <property type="term" value="P:T cell costimulation"/>
    <property type="evidence" value="ECO:0000316"/>
    <property type="project" value="MGI"/>
</dbReference>
<dbReference type="GO" id="GO:0042098">
    <property type="term" value="P:T cell proliferation"/>
    <property type="evidence" value="ECO:0000314"/>
    <property type="project" value="MGI"/>
</dbReference>
<dbReference type="GO" id="GO:0050852">
    <property type="term" value="P:T cell receptor signaling pathway"/>
    <property type="evidence" value="ECO:0000314"/>
    <property type="project" value="MGI"/>
</dbReference>
<dbReference type="FunFam" id="2.60.40.10:FF:001422">
    <property type="entry name" value="T-cell surface glycoprotein CD3 epsilon chain"/>
    <property type="match status" value="1"/>
</dbReference>
<dbReference type="Gene3D" id="2.60.40.10">
    <property type="entry name" value="Immunoglobulins"/>
    <property type="match status" value="1"/>
</dbReference>
<dbReference type="InterPro" id="IPR015484">
    <property type="entry name" value="CD3_esu/gsu/dsu"/>
</dbReference>
<dbReference type="InterPro" id="IPR007110">
    <property type="entry name" value="Ig-like_dom"/>
</dbReference>
<dbReference type="InterPro" id="IPR036179">
    <property type="entry name" value="Ig-like_dom_sf"/>
</dbReference>
<dbReference type="InterPro" id="IPR013783">
    <property type="entry name" value="Ig-like_fold"/>
</dbReference>
<dbReference type="InterPro" id="IPR003598">
    <property type="entry name" value="Ig_sub2"/>
</dbReference>
<dbReference type="InterPro" id="IPR003110">
    <property type="entry name" value="Phos_immunorcpt_sig_ITAM"/>
</dbReference>
<dbReference type="PANTHER" id="PTHR10570:SF9">
    <property type="entry name" value="T-CELL SURFACE GLYCOPROTEIN CD3 EPSILON CHAIN"/>
    <property type="match status" value="1"/>
</dbReference>
<dbReference type="PANTHER" id="PTHR10570">
    <property type="entry name" value="T-CELL SURFACE GLYCOPROTEIN CD3 GAMMA CHAIN / DELTA CHAIN"/>
    <property type="match status" value="1"/>
</dbReference>
<dbReference type="Pfam" id="PF16681">
    <property type="entry name" value="Ig_5"/>
    <property type="match status" value="1"/>
</dbReference>
<dbReference type="Pfam" id="PF02189">
    <property type="entry name" value="ITAM"/>
    <property type="match status" value="1"/>
</dbReference>
<dbReference type="SMART" id="SM00408">
    <property type="entry name" value="IGc2"/>
    <property type="match status" value="1"/>
</dbReference>
<dbReference type="SMART" id="SM00077">
    <property type="entry name" value="ITAM"/>
    <property type="match status" value="1"/>
</dbReference>
<dbReference type="SUPFAM" id="SSF48726">
    <property type="entry name" value="Immunoglobulin"/>
    <property type="match status" value="1"/>
</dbReference>
<dbReference type="PROSITE" id="PS50835">
    <property type="entry name" value="IG_LIKE"/>
    <property type="match status" value="1"/>
</dbReference>
<dbReference type="PROSITE" id="PS51055">
    <property type="entry name" value="ITAM_1"/>
    <property type="match status" value="1"/>
</dbReference>
<name>CD3E_MOUSE</name>
<reference key="1">
    <citation type="journal article" date="1987" name="Proc. Natl. Acad. Sci. U.S.A.">
        <title>Evolutionary relationship between the T3 chains of the T-cell receptor complex and the immunoglobulin supergene family.</title>
        <authorList>
            <person name="Gold D.P."/>
            <person name="Clevers H."/>
            <person name="Alarcon B."/>
            <person name="Dunlap S."/>
            <person name="Novotny J."/>
            <person name="Williams A.F."/>
            <person name="Terhorst C."/>
        </authorList>
    </citation>
    <scope>NUCLEOTIDE SEQUENCE [MRNA]</scope>
</reference>
<reference key="2">
    <citation type="journal article" date="1988" name="Proc. Natl. Acad. Sci. U.S.A.">
        <title>Characterization and expression of the murine CD3-epsilon gene.</title>
        <authorList>
            <person name="Clevers H."/>
            <person name="Dunlap S."/>
            <person name="Saito H."/>
            <person name="Georgopoulos K."/>
            <person name="Wileman T."/>
            <person name="Terhorst C."/>
        </authorList>
    </citation>
    <scope>NUCLEOTIDE SEQUENCE [GENOMIC DNA]</scope>
</reference>
<reference key="3">
    <citation type="journal article" date="1998" name="Proc. Natl. Acad. Sci. U.S.A.">
        <title>Specific requirement for CD3epsilon in T cell development.</title>
        <authorList>
            <person name="DeJarnette J.B."/>
            <person name="Sommers C.L."/>
            <person name="Huang K."/>
            <person name="Woodside K.J."/>
            <person name="Emmons R."/>
            <person name="Katz K."/>
            <person name="Shores E.W."/>
            <person name="Love P.E."/>
        </authorList>
    </citation>
    <scope>FUNCTION</scope>
    <scope>DISRUPTION PHENOTYPE</scope>
</reference>
<reference key="4">
    <citation type="journal article" date="2009" name="PLoS Biol.">
        <title>A conserved CXXC motif in CD3epsilon is critical for T cell development and TCR signaling.</title>
        <authorList>
            <person name="Wang Y."/>
            <person name="Becker D."/>
            <person name="Vass T."/>
            <person name="White J."/>
            <person name="Marrack P."/>
            <person name="Kappler J.W."/>
        </authorList>
    </citation>
    <scope>FUNCTION</scope>
</reference>
<reference key="5">
    <citation type="journal article" date="2010" name="Cell">
        <title>A tissue-specific atlas of mouse protein phosphorylation and expression.</title>
        <authorList>
            <person name="Huttlin E.L."/>
            <person name="Jedrychowski M.P."/>
            <person name="Elias J.E."/>
            <person name="Goswami T."/>
            <person name="Rad R."/>
            <person name="Beausoleil S.A."/>
            <person name="Villen J."/>
            <person name="Haas W."/>
            <person name="Sowa M.E."/>
            <person name="Gygi S.P."/>
        </authorList>
    </citation>
    <scope>IDENTIFICATION BY MASS SPECTROMETRY [LARGE SCALE ANALYSIS]</scope>
    <source>
        <tissue>Spleen</tissue>
    </source>
</reference>
<reference key="6">
    <citation type="journal article" date="2001" name="Cell">
        <title>Mechanisms contributing to T cell receptor signaling and assembly revealed by the solution structure of an ectodomain fragment of the CD3 epsilon gamma heterodimer.</title>
        <authorList>
            <person name="Sun Z.J."/>
            <person name="Kim K.S."/>
            <person name="Wagner G."/>
            <person name="Reinherz E.L."/>
        </authorList>
    </citation>
    <scope>STRUCTURE BY NMR OF 22-100</scope>
    <scope>DISULFIDE BONDS</scope>
</reference>
<reference key="7">
    <citation type="journal article" date="2014" name="J. Immunol.">
        <title>Relevance of Nck-CD3 epsilon interaction for T cell activation in vivo.</title>
        <authorList>
            <person name="Borroto A."/>
            <person name="Arellano I."/>
            <person name="Blanco R."/>
            <person name="Fuentes M."/>
            <person name="Orfao A."/>
            <person name="Dopfer E.P."/>
            <person name="Prouza M."/>
            <person name="Suchanek M."/>
            <person name="Schamel W.W."/>
            <person name="Alarcon B."/>
        </authorList>
    </citation>
    <scope>FUNCTION</scope>
    <scope>INTERACTION WITH NCK1</scope>
    <scope>SUBCELLULAR LOCATION</scope>
</reference>
<reference key="8">
    <citation type="journal article" date="2014" name="J. Immunol.">
        <title>Membrane association of the CD3epsilon signaling domain is required for optimal T cell development and function.</title>
        <authorList>
            <person name="Bettini M.L."/>
            <person name="Guy C."/>
            <person name="Dash P."/>
            <person name="Vignali K.M."/>
            <person name="Hamm D.E."/>
            <person name="Dobbins J."/>
            <person name="Gagnon E."/>
            <person name="Thomas P.G."/>
            <person name="Wucherpfennig K.W."/>
            <person name="Vignali D.A."/>
        </authorList>
    </citation>
    <scope>FUNCTION</scope>
</reference>
<gene>
    <name type="primary">Cd3e</name>
</gene>
<feature type="signal peptide">
    <location>
        <begin position="1"/>
        <end position="21"/>
    </location>
</feature>
<feature type="chain" id="PRO_0000014609" description="T-cell surface glycoprotein CD3 epsilon chain">
    <location>
        <begin position="22"/>
        <end position="189"/>
    </location>
</feature>
<feature type="topological domain" description="Extracellular" evidence="2">
    <location>
        <begin position="23"/>
        <end position="108"/>
    </location>
</feature>
<feature type="transmembrane region" description="Helical" evidence="2">
    <location>
        <begin position="109"/>
        <end position="134"/>
    </location>
</feature>
<feature type="topological domain" description="Cytoplasmic" evidence="2">
    <location>
        <begin position="135"/>
        <end position="189"/>
    </location>
</feature>
<feature type="domain" description="Ig-like">
    <location>
        <begin position="23"/>
        <end position="99"/>
    </location>
</feature>
<feature type="domain" description="ITAM" evidence="3">
    <location>
        <begin position="160"/>
        <end position="187"/>
    </location>
</feature>
<feature type="region of interest" description="Disordered" evidence="4">
    <location>
        <begin position="143"/>
        <end position="189"/>
    </location>
</feature>
<feature type="region of interest" description="NUMB-binding region" evidence="1">
    <location>
        <begin position="157"/>
        <end position="174"/>
    </location>
</feature>
<feature type="region of interest" description="Proline-rich sequence" evidence="1">
    <location>
        <begin position="161"/>
        <end position="168"/>
    </location>
</feature>
<feature type="modified residue" description="Phosphotyrosine" evidence="1 3">
    <location>
        <position position="170"/>
    </location>
</feature>
<feature type="modified residue" description="Phosphotyrosine" evidence="1 3">
    <location>
        <position position="181"/>
    </location>
</feature>
<feature type="disulfide bond" evidence="5 10">
    <location>
        <begin position="42"/>
        <end position="83"/>
    </location>
</feature>
<feature type="strand" evidence="11">
    <location>
        <begin position="30"/>
        <end position="34"/>
    </location>
</feature>
<feature type="strand" evidence="11">
    <location>
        <begin position="37"/>
        <end position="41"/>
    </location>
</feature>
<feature type="strand" evidence="11">
    <location>
        <begin position="51"/>
        <end position="54"/>
    </location>
</feature>
<feature type="strand" evidence="11">
    <location>
        <begin position="57"/>
        <end position="59"/>
    </location>
</feature>
<feature type="strand" evidence="11">
    <location>
        <begin position="65"/>
        <end position="71"/>
    </location>
</feature>
<feature type="turn" evidence="11">
    <location>
        <begin position="74"/>
        <end position="76"/>
    </location>
</feature>
<feature type="strand" evidence="11">
    <location>
        <begin position="79"/>
        <end position="84"/>
    </location>
</feature>
<feature type="strand" evidence="11">
    <location>
        <begin position="94"/>
        <end position="96"/>
    </location>
</feature>
<feature type="turn" evidence="12">
    <location>
        <begin position="135"/>
        <end position="137"/>
    </location>
</feature>
<feature type="helix" evidence="12">
    <location>
        <begin position="144"/>
        <end position="146"/>
    </location>
</feature>
<feature type="helix" evidence="12">
    <location>
        <begin position="168"/>
        <end position="170"/>
    </location>
</feature>
<feature type="helix" evidence="12">
    <location>
        <begin position="179"/>
        <end position="182"/>
    </location>
</feature>
<feature type="helix" evidence="12">
    <location>
        <begin position="183"/>
        <end position="185"/>
    </location>
</feature>
<feature type="turn" evidence="12">
    <location>
        <begin position="186"/>
        <end position="188"/>
    </location>
</feature>
<organism>
    <name type="scientific">Mus musculus</name>
    <name type="common">Mouse</name>
    <dbReference type="NCBI Taxonomy" id="10090"/>
    <lineage>
        <taxon>Eukaryota</taxon>
        <taxon>Metazoa</taxon>
        <taxon>Chordata</taxon>
        <taxon>Craniata</taxon>
        <taxon>Vertebrata</taxon>
        <taxon>Euteleostomi</taxon>
        <taxon>Mammalia</taxon>
        <taxon>Eutheria</taxon>
        <taxon>Euarchontoglires</taxon>
        <taxon>Glires</taxon>
        <taxon>Rodentia</taxon>
        <taxon>Myomorpha</taxon>
        <taxon>Muroidea</taxon>
        <taxon>Muridae</taxon>
        <taxon>Murinae</taxon>
        <taxon>Mus</taxon>
        <taxon>Mus</taxon>
    </lineage>
</organism>
<accession>P22646</accession>
<comment type="function">
    <text evidence="1 6 7 8 9">Part of the TCR-CD3 complex present on T-lymphocyte cell surface that plays an essential role in adaptive immune response. When antigen presenting cells (APCs) activate T-cell receptor (TCR), TCR-mediated signals are transmitted across the cell membrane by the CD3 chains CD3D, CD3E, CD3G and CD3Z. All CD3 chains contain immunoreceptor tyrosine-based activation motifs (ITAMs) in their cytoplasmic domain. Upon TCR engagement, these motifs become phosphorylated by Src family protein tyrosine kinases LCK and FYN, resulting in the activation of downstream signaling pathways. In addition of this role of signal transduction in T-cell activation, CD3E plays an essential role in correct T-cell development (PubMed:19956738, PubMed:24899501). Also participates in internalization and cell surface down-regulation of TCR-CD3 complexes via endocytosis sequences present in CD3E cytosolic region. In addition to its role as a TCR coreceptor, it serves as a receptor for ITPRIPL1. Ligand recognition inhibits T-cell activation by promoting interaction with NCK1, which prevents CD3E-ZAP70 interaction and blocks the ERK-NFkB signaling cascade and calcium influx (By similarity).</text>
</comment>
<comment type="subunit">
    <text evidence="1 7">The TCR-CD3 complex is composed of a CD3D/CD3E and a CD3G/CD3E heterodimers that preferentially associate with TCRalpha and TCRbeta, respectively, to form TCRalpha/CD3E/CD3G and TCRbeta/CD3G/CD3E trimers. In turn, the hexamer interacts with CD3Z homodimer to form the TCR-CD3 complex. Alternatively, TCRalpha and TCRbeta can be replaced by TCRgamma and TCRdelta. Interacts with CD6. Interacts (via Proline-rich sequence) with NCK1; the interaction is ligand dependent but independent of tyrosine kinase activation (PubMed:24470497).</text>
</comment>
<comment type="subcellular location">
    <subcellularLocation>
        <location evidence="7">Cell membrane</location>
        <topology evidence="1">Single-pass type I membrane protein</topology>
    </subcellularLocation>
</comment>
<comment type="PTM">
    <text evidence="1">Phosphorylated on Tyr residues after T-cell receptor triggering by LCK in association with CD4/CD8.</text>
</comment>
<comment type="disruption phenotype">
    <text evidence="9">Absence of CD3E leads to the complete absence of mature T-cells. Thymocyte development is arrested at the early double-negative (DN) stage.</text>
</comment>
<sequence length="189" mass="21393">MRWNTFWGILCLSLLAVGTCQDDAENIEYKVSISGTSVELTCPLDSDENLKWEKNGQELPQKHDKHLVLQDFSEVEDSGYYVCYTPASNKNTYLYLKARVCEYCVEVDLTAVAIIIIVDICITLGLLMVIYYWSKNRKAKAKPVTRGTGAGSRPRGQNKERPPPVPNPDYEPIRKGQRDLYSGLNQRAV</sequence>
<protein>
    <recommendedName>
        <fullName>T-cell surface glycoprotein CD3 epsilon chain</fullName>
    </recommendedName>
    <alternativeName>
        <fullName>T-cell surface antigen T3/Leu-4 epsilon chain</fullName>
    </alternativeName>
    <cdAntigenName>CD3e</cdAntigenName>
</protein>
<evidence type="ECO:0000250" key="1">
    <source>
        <dbReference type="UniProtKB" id="P07766"/>
    </source>
</evidence>
<evidence type="ECO:0000255" key="2"/>
<evidence type="ECO:0000255" key="3">
    <source>
        <dbReference type="PROSITE-ProRule" id="PRU00379"/>
    </source>
</evidence>
<evidence type="ECO:0000256" key="4">
    <source>
        <dbReference type="SAM" id="MobiDB-lite"/>
    </source>
</evidence>
<evidence type="ECO:0000269" key="5">
    <source>
    </source>
</evidence>
<evidence type="ECO:0000269" key="6">
    <source>
    </source>
</evidence>
<evidence type="ECO:0000269" key="7">
    <source>
    </source>
</evidence>
<evidence type="ECO:0000269" key="8">
    <source>
    </source>
</evidence>
<evidence type="ECO:0000269" key="9">
    <source>
    </source>
</evidence>
<evidence type="ECO:0007744" key="10">
    <source>
        <dbReference type="PDB" id="1JBJ"/>
    </source>
</evidence>
<evidence type="ECO:0007829" key="11">
    <source>
        <dbReference type="PDB" id="1JBJ"/>
    </source>
</evidence>
<evidence type="ECO:0007829" key="12">
    <source>
        <dbReference type="PDB" id="2K4F"/>
    </source>
</evidence>
<keyword id="KW-0002">3D-structure</keyword>
<keyword id="KW-1064">Adaptive immunity</keyword>
<keyword id="KW-1003">Cell membrane</keyword>
<keyword id="KW-1015">Disulfide bond</keyword>
<keyword id="KW-0391">Immunity</keyword>
<keyword id="KW-0393">Immunoglobulin domain</keyword>
<keyword id="KW-0472">Membrane</keyword>
<keyword id="KW-0597">Phosphoprotein</keyword>
<keyword id="KW-0675">Receptor</keyword>
<keyword id="KW-1185">Reference proteome</keyword>
<keyword id="KW-0732">Signal</keyword>
<keyword id="KW-0812">Transmembrane</keyword>
<keyword id="KW-1133">Transmembrane helix</keyword>